<geneLocation type="chloroplast"/>
<keyword id="KW-0150">Chloroplast</keyword>
<keyword id="KW-0472">Membrane</keyword>
<keyword id="KW-0602">Photosynthesis</keyword>
<keyword id="KW-0604">Photosystem II</keyword>
<keyword id="KW-0934">Plastid</keyword>
<keyword id="KW-0674">Reaction center</keyword>
<keyword id="KW-0793">Thylakoid</keyword>
<keyword id="KW-0812">Transmembrane</keyword>
<keyword id="KW-1133">Transmembrane helix</keyword>
<organism>
    <name type="scientific">Chlorella vulgaris</name>
    <name type="common">Green alga</name>
    <dbReference type="NCBI Taxonomy" id="3077"/>
    <lineage>
        <taxon>Eukaryota</taxon>
        <taxon>Viridiplantae</taxon>
        <taxon>Chlorophyta</taxon>
        <taxon>core chlorophytes</taxon>
        <taxon>Trebouxiophyceae</taxon>
        <taxon>Chlorellales</taxon>
        <taxon>Chlorellaceae</taxon>
        <taxon>Chlorella clade</taxon>
        <taxon>Chlorella</taxon>
    </lineage>
</organism>
<proteinExistence type="inferred from homology"/>
<feature type="chain" id="PRO_0000217554" description="Photosystem II reaction center protein M">
    <location>
        <begin position="1"/>
        <end position="36"/>
    </location>
</feature>
<feature type="transmembrane region" description="Helical" evidence="1">
    <location>
        <begin position="5"/>
        <end position="25"/>
    </location>
</feature>
<evidence type="ECO:0000255" key="1">
    <source>
        <dbReference type="HAMAP-Rule" id="MF_00438"/>
    </source>
</evidence>
<accession>P56325</accession>
<dbReference type="EMBL" id="AB001684">
    <property type="protein sequence ID" value="BAA57919.1"/>
    <property type="molecule type" value="Genomic_DNA"/>
</dbReference>
<dbReference type="PIR" id="T07271">
    <property type="entry name" value="T07271"/>
</dbReference>
<dbReference type="RefSeq" id="NP_045843.1">
    <property type="nucleotide sequence ID" value="NC_001865.1"/>
</dbReference>
<dbReference type="SMR" id="P56325"/>
<dbReference type="GeneID" id="809162"/>
<dbReference type="GO" id="GO:0009535">
    <property type="term" value="C:chloroplast thylakoid membrane"/>
    <property type="evidence" value="ECO:0007669"/>
    <property type="project" value="UniProtKB-SubCell"/>
</dbReference>
<dbReference type="GO" id="GO:0009523">
    <property type="term" value="C:photosystem II"/>
    <property type="evidence" value="ECO:0007669"/>
    <property type="project" value="UniProtKB-KW"/>
</dbReference>
<dbReference type="GO" id="GO:0019684">
    <property type="term" value="P:photosynthesis, light reaction"/>
    <property type="evidence" value="ECO:0007669"/>
    <property type="project" value="InterPro"/>
</dbReference>
<dbReference type="HAMAP" id="MF_00438">
    <property type="entry name" value="PSII_PsbM"/>
    <property type="match status" value="1"/>
</dbReference>
<dbReference type="InterPro" id="IPR007826">
    <property type="entry name" value="PSII_PsbM"/>
</dbReference>
<dbReference type="InterPro" id="IPR037269">
    <property type="entry name" value="PSII_PsbM_sf"/>
</dbReference>
<dbReference type="NCBIfam" id="TIGR03038">
    <property type="entry name" value="PS_II_psbM"/>
    <property type="match status" value="1"/>
</dbReference>
<dbReference type="PANTHER" id="PTHR35774">
    <property type="entry name" value="PHOTOSYSTEM II REACTION CENTER PROTEIN M"/>
    <property type="match status" value="1"/>
</dbReference>
<dbReference type="PANTHER" id="PTHR35774:SF1">
    <property type="entry name" value="PHOTOSYSTEM II REACTION CENTER PROTEIN M"/>
    <property type="match status" value="1"/>
</dbReference>
<dbReference type="Pfam" id="PF05151">
    <property type="entry name" value="PsbM"/>
    <property type="match status" value="1"/>
</dbReference>
<dbReference type="SUPFAM" id="SSF161033">
    <property type="entry name" value="Photosystem II reaction center protein M, PsbM"/>
    <property type="match status" value="1"/>
</dbReference>
<reference key="1">
    <citation type="journal article" date="1997" name="Proc. Natl. Acad. Sci. U.S.A.">
        <title>Complete nucleotide sequence of the chloroplast genome from the green alga Chlorella vulgaris: the existence of genes possibly involved in chloroplast division.</title>
        <authorList>
            <person name="Wakasugi T."/>
            <person name="Nagai T."/>
            <person name="Kapoor M."/>
            <person name="Sugita M."/>
            <person name="Ito M."/>
            <person name="Ito S."/>
            <person name="Tsudzuki J."/>
            <person name="Nakashima K."/>
            <person name="Tsudzuki T."/>
            <person name="Suzuki Y."/>
            <person name="Hamada A."/>
            <person name="Ohta T."/>
            <person name="Inamura A."/>
            <person name="Yoshinaga K."/>
            <person name="Sugiura M."/>
        </authorList>
    </citation>
    <scope>NUCLEOTIDE SEQUENCE [LARGE SCALE GENOMIC DNA]</scope>
    <source>
        <strain>IAM C-27 / Tamiya</strain>
    </source>
</reference>
<sequence length="36" mass="4008">MEVNILGVIATALFIIIPTSFLLILYVKTASQEQEQ</sequence>
<name>PSBM_CHLVU</name>
<protein>
    <recommendedName>
        <fullName evidence="1">Photosystem II reaction center protein M</fullName>
        <shortName evidence="1">PSII-M</shortName>
    </recommendedName>
</protein>
<gene>
    <name evidence="1" type="primary">psbM</name>
</gene>
<comment type="function">
    <text evidence="1">One of the components of the core complex of photosystem II (PSII). PSII is a light-driven water:plastoquinone oxidoreductase that uses light energy to abstract electrons from H(2)O, generating O(2) and a proton gradient subsequently used for ATP formation. It consists of a core antenna complex that captures photons, and an electron transfer chain that converts photonic excitation into a charge separation. This subunit is found at the monomer-monomer interface.</text>
</comment>
<comment type="subunit">
    <text evidence="1">PSII is composed of 1 copy each of membrane proteins PsbA, PsbB, PsbC, PsbD, PsbE, PsbF, PsbH, PsbI, PsbJ, PsbK, PsbL, PsbM, PsbT, PsbX, PsbY, PsbZ, Psb30/Ycf12, at least 3 peripheral proteins of the oxygen-evolving complex and a large number of cofactors. It forms dimeric complexes.</text>
</comment>
<comment type="subcellular location">
    <subcellularLocation>
        <location evidence="1">Plastid</location>
        <location evidence="1">Chloroplast thylakoid membrane</location>
        <topology evidence="1">Single-pass membrane protein</topology>
    </subcellularLocation>
</comment>
<comment type="similarity">
    <text evidence="1">Belongs to the PsbM family.</text>
</comment>